<sequence>MNSIVNFSQQLIQNFQEVSQRTAADSSNLKAFAYLGAGLAMIGVIGVGAGQGYAAGKACDAIARNPEAQKQVFRVLVIGTAISETSSIYALLVALILIFVG</sequence>
<reference key="1">
    <citation type="journal article" date="2005" name="J. Bacteriol.">
        <title>Swine and poultry pathogens: the complete genome sequences of two strains of Mycoplasma hyopneumoniae and a strain of Mycoplasma synoviae.</title>
        <authorList>
            <person name="Vasconcelos A.T.R."/>
            <person name="Ferreira H.B."/>
            <person name="Bizarro C.V."/>
            <person name="Bonatto S.L."/>
            <person name="Carvalho M.O."/>
            <person name="Pinto P.M."/>
            <person name="Almeida D.F."/>
            <person name="Almeida L.G.P."/>
            <person name="Almeida R."/>
            <person name="Alves-Junior L."/>
            <person name="Assuncao E.N."/>
            <person name="Azevedo V.A.C."/>
            <person name="Bogo M.R."/>
            <person name="Brigido M.M."/>
            <person name="Brocchi M."/>
            <person name="Burity H.A."/>
            <person name="Camargo A.A."/>
            <person name="Camargo S.S."/>
            <person name="Carepo M.S."/>
            <person name="Carraro D.M."/>
            <person name="de Mattos Cascardo J.C."/>
            <person name="Castro L.A."/>
            <person name="Cavalcanti G."/>
            <person name="Chemale G."/>
            <person name="Collevatti R.G."/>
            <person name="Cunha C.W."/>
            <person name="Dallagiovanna B."/>
            <person name="Dambros B.P."/>
            <person name="Dellagostin O.A."/>
            <person name="Falcao C."/>
            <person name="Fantinatti-Garboggini F."/>
            <person name="Felipe M.S.S."/>
            <person name="Fiorentin L."/>
            <person name="Franco G.R."/>
            <person name="Freitas N.S.A."/>
            <person name="Frias D."/>
            <person name="Grangeiro T.B."/>
            <person name="Grisard E.C."/>
            <person name="Guimaraes C.T."/>
            <person name="Hungria M."/>
            <person name="Jardim S.N."/>
            <person name="Krieger M.A."/>
            <person name="Laurino J.P."/>
            <person name="Lima L.F.A."/>
            <person name="Lopes M.I."/>
            <person name="Loreto E.L.S."/>
            <person name="Madeira H.M.F."/>
            <person name="Manfio G.P."/>
            <person name="Maranhao A.Q."/>
            <person name="Martinkovics C.T."/>
            <person name="Medeiros S.R.B."/>
            <person name="Moreira M.A.M."/>
            <person name="Neiva M."/>
            <person name="Ramalho-Neto C.E."/>
            <person name="Nicolas M.F."/>
            <person name="Oliveira S.C."/>
            <person name="Paixao R.F.C."/>
            <person name="Pedrosa F.O."/>
            <person name="Pena S.D.J."/>
            <person name="Pereira M."/>
            <person name="Pereira-Ferrari L."/>
            <person name="Piffer I."/>
            <person name="Pinto L.S."/>
            <person name="Potrich D.P."/>
            <person name="Salim A.C.M."/>
            <person name="Santos F.R."/>
            <person name="Schmitt R."/>
            <person name="Schneider M.P.C."/>
            <person name="Schrank A."/>
            <person name="Schrank I.S."/>
            <person name="Schuck A.F."/>
            <person name="Seuanez H.N."/>
            <person name="Silva D.W."/>
            <person name="Silva R."/>
            <person name="Silva S.C."/>
            <person name="Soares C.M.A."/>
            <person name="Souza K.R.L."/>
            <person name="Souza R.C."/>
            <person name="Staats C.C."/>
            <person name="Steffens M.B.R."/>
            <person name="Teixeira S.M.R."/>
            <person name="Urmenyi T.P."/>
            <person name="Vainstein M.H."/>
            <person name="Zuccherato L.W."/>
            <person name="Simpson A.J.G."/>
            <person name="Zaha A."/>
        </authorList>
    </citation>
    <scope>NUCLEOTIDE SEQUENCE [LARGE SCALE GENOMIC DNA]</scope>
    <source>
        <strain>J / ATCC 25934 / NCTC 10110</strain>
    </source>
</reference>
<comment type="function">
    <text evidence="1">F(1)F(0) ATP synthase produces ATP from ADP in the presence of a proton or sodium gradient. F-type ATPases consist of two structural domains, F(1) containing the extramembraneous catalytic core and F(0) containing the membrane proton channel, linked together by a central stalk and a peripheral stalk. During catalysis, ATP synthesis in the catalytic domain of F(1) is coupled via a rotary mechanism of the central stalk subunits to proton translocation.</text>
</comment>
<comment type="function">
    <text evidence="1">Key component of the F(0) channel; it plays a direct role in translocation across the membrane. A homomeric c-ring of between 10-14 subunits forms the central stalk rotor element with the F(1) delta and epsilon subunits.</text>
</comment>
<comment type="subunit">
    <text evidence="1">F-type ATPases have 2 components, F(1) - the catalytic core - and F(0) - the membrane proton channel. F(1) has five subunits: alpha(3), beta(3), gamma(1), delta(1), epsilon(1). F(0) has three main subunits: a(1), b(2) and c(10-14). The alpha and beta chains form an alternating ring which encloses part of the gamma chain. F(1) is attached to F(0) by a central stalk formed by the gamma and epsilon chains, while a peripheral stalk is formed by the delta and b chains.</text>
</comment>
<comment type="subcellular location">
    <subcellularLocation>
        <location evidence="1">Cell membrane</location>
        <topology evidence="1">Multi-pass membrane protein</topology>
    </subcellularLocation>
</comment>
<comment type="similarity">
    <text evidence="1">Belongs to the ATPase C chain family.</text>
</comment>
<proteinExistence type="inferred from homology"/>
<name>ATPL_MESHJ</name>
<protein>
    <recommendedName>
        <fullName evidence="1">ATP synthase subunit c</fullName>
    </recommendedName>
    <alternativeName>
        <fullName evidence="1">ATP synthase F(0) sector subunit c</fullName>
    </alternativeName>
    <alternativeName>
        <fullName evidence="1">F-type ATPase subunit c</fullName>
        <shortName evidence="1">F-ATPase subunit c</shortName>
    </alternativeName>
    <alternativeName>
        <fullName evidence="1">Lipid-binding protein</fullName>
    </alternativeName>
</protein>
<organism>
    <name type="scientific">Mesomycoplasma hyopneumoniae (strain J / ATCC 25934 / NCTC 10110)</name>
    <name type="common">Mycoplasma hyopneumoniae</name>
    <dbReference type="NCBI Taxonomy" id="262719"/>
    <lineage>
        <taxon>Bacteria</taxon>
        <taxon>Bacillati</taxon>
        <taxon>Mycoplasmatota</taxon>
        <taxon>Mycoplasmoidales</taxon>
        <taxon>Metamycoplasmataceae</taxon>
        <taxon>Mesomycoplasma</taxon>
    </lineage>
</organism>
<evidence type="ECO:0000255" key="1">
    <source>
        <dbReference type="HAMAP-Rule" id="MF_01396"/>
    </source>
</evidence>
<keyword id="KW-0066">ATP synthesis</keyword>
<keyword id="KW-1003">Cell membrane</keyword>
<keyword id="KW-0138">CF(0)</keyword>
<keyword id="KW-0375">Hydrogen ion transport</keyword>
<keyword id="KW-0406">Ion transport</keyword>
<keyword id="KW-0446">Lipid-binding</keyword>
<keyword id="KW-0472">Membrane</keyword>
<keyword id="KW-0812">Transmembrane</keyword>
<keyword id="KW-1133">Transmembrane helix</keyword>
<keyword id="KW-0813">Transport</keyword>
<dbReference type="EMBL" id="AE017243">
    <property type="protein sequence ID" value="AAZ44138.1"/>
    <property type="molecule type" value="Genomic_DNA"/>
</dbReference>
<dbReference type="RefSeq" id="WP_011283865.1">
    <property type="nucleotide sequence ID" value="NC_007295.1"/>
</dbReference>
<dbReference type="SMR" id="Q4AAW2"/>
<dbReference type="GeneID" id="41334332"/>
<dbReference type="KEGG" id="mhj:MHJ_0044"/>
<dbReference type="eggNOG" id="COG0636">
    <property type="taxonomic scope" value="Bacteria"/>
</dbReference>
<dbReference type="HOGENOM" id="CLU_148047_2_2_14"/>
<dbReference type="OrthoDB" id="9810379at2"/>
<dbReference type="Proteomes" id="UP000000548">
    <property type="component" value="Chromosome"/>
</dbReference>
<dbReference type="GO" id="GO:0005886">
    <property type="term" value="C:plasma membrane"/>
    <property type="evidence" value="ECO:0007669"/>
    <property type="project" value="UniProtKB-SubCell"/>
</dbReference>
<dbReference type="GO" id="GO:0045259">
    <property type="term" value="C:proton-transporting ATP synthase complex"/>
    <property type="evidence" value="ECO:0007669"/>
    <property type="project" value="UniProtKB-KW"/>
</dbReference>
<dbReference type="GO" id="GO:0033177">
    <property type="term" value="C:proton-transporting two-sector ATPase complex, proton-transporting domain"/>
    <property type="evidence" value="ECO:0007669"/>
    <property type="project" value="InterPro"/>
</dbReference>
<dbReference type="GO" id="GO:0008289">
    <property type="term" value="F:lipid binding"/>
    <property type="evidence" value="ECO:0007669"/>
    <property type="project" value="UniProtKB-KW"/>
</dbReference>
<dbReference type="GO" id="GO:0046933">
    <property type="term" value="F:proton-transporting ATP synthase activity, rotational mechanism"/>
    <property type="evidence" value="ECO:0007669"/>
    <property type="project" value="UniProtKB-UniRule"/>
</dbReference>
<dbReference type="CDD" id="cd18184">
    <property type="entry name" value="ATP-synt_Fo_c_NaATPase"/>
    <property type="match status" value="1"/>
</dbReference>
<dbReference type="Gene3D" id="1.20.120.610">
    <property type="entry name" value="lithium bound rotor ring of v- atpase"/>
    <property type="match status" value="1"/>
</dbReference>
<dbReference type="HAMAP" id="MF_01396">
    <property type="entry name" value="ATP_synth_c_bact"/>
    <property type="match status" value="1"/>
</dbReference>
<dbReference type="InterPro" id="IPR005953">
    <property type="entry name" value="ATP_synth_csu_bac/chlpt"/>
</dbReference>
<dbReference type="InterPro" id="IPR000454">
    <property type="entry name" value="ATP_synth_F0_csu"/>
</dbReference>
<dbReference type="InterPro" id="IPR020537">
    <property type="entry name" value="ATP_synth_F0_csu_DDCD_BS"/>
</dbReference>
<dbReference type="InterPro" id="IPR002379">
    <property type="entry name" value="ATPase_proteolipid_c-like_dom"/>
</dbReference>
<dbReference type="InterPro" id="IPR035921">
    <property type="entry name" value="F/V-ATP_Csub_sf"/>
</dbReference>
<dbReference type="NCBIfam" id="TIGR01260">
    <property type="entry name" value="ATP_synt_c"/>
    <property type="match status" value="1"/>
</dbReference>
<dbReference type="NCBIfam" id="NF005521">
    <property type="entry name" value="PRK07159.1"/>
    <property type="match status" value="1"/>
</dbReference>
<dbReference type="PANTHER" id="PTHR10031">
    <property type="entry name" value="ATP SYNTHASE LIPID-BINDING PROTEIN, MITOCHONDRIAL"/>
    <property type="match status" value="1"/>
</dbReference>
<dbReference type="PANTHER" id="PTHR10031:SF0">
    <property type="entry name" value="ATPASE PROTEIN 9"/>
    <property type="match status" value="1"/>
</dbReference>
<dbReference type="Pfam" id="PF00137">
    <property type="entry name" value="ATP-synt_C"/>
    <property type="match status" value="1"/>
</dbReference>
<dbReference type="PRINTS" id="PR00124">
    <property type="entry name" value="ATPASEC"/>
</dbReference>
<dbReference type="SUPFAM" id="SSF81333">
    <property type="entry name" value="F1F0 ATP synthase subunit C"/>
    <property type="match status" value="1"/>
</dbReference>
<dbReference type="PROSITE" id="PS00605">
    <property type="entry name" value="ATPASE_C"/>
    <property type="match status" value="1"/>
</dbReference>
<feature type="chain" id="PRO_0000365900" description="ATP synthase subunit c">
    <location>
        <begin position="1"/>
        <end position="101"/>
    </location>
</feature>
<feature type="transmembrane region" description="Helical" evidence="1">
    <location>
        <begin position="31"/>
        <end position="51"/>
    </location>
</feature>
<feature type="transmembrane region" description="Helical" evidence="1">
    <location>
        <begin position="81"/>
        <end position="101"/>
    </location>
</feature>
<feature type="site" description="Reversibly protonated during proton transport" evidence="1">
    <location>
        <position position="84"/>
    </location>
</feature>
<accession>Q4AAW2</accession>
<gene>
    <name evidence="1" type="primary">atpE</name>
    <name type="ordered locus">MHJ_0044</name>
</gene>